<organism>
    <name type="scientific">Arabidopsis thaliana</name>
    <name type="common">Mouse-ear cress</name>
    <dbReference type="NCBI Taxonomy" id="3702"/>
    <lineage>
        <taxon>Eukaryota</taxon>
        <taxon>Viridiplantae</taxon>
        <taxon>Streptophyta</taxon>
        <taxon>Embryophyta</taxon>
        <taxon>Tracheophyta</taxon>
        <taxon>Spermatophyta</taxon>
        <taxon>Magnoliopsida</taxon>
        <taxon>eudicotyledons</taxon>
        <taxon>Gunneridae</taxon>
        <taxon>Pentapetalae</taxon>
        <taxon>rosids</taxon>
        <taxon>malvids</taxon>
        <taxon>Brassicales</taxon>
        <taxon>Brassicaceae</taxon>
        <taxon>Camelineae</taxon>
        <taxon>Arabidopsis</taxon>
    </lineage>
</organism>
<feature type="signal peptide" evidence="2">
    <location>
        <begin position="1"/>
        <end position="25"/>
    </location>
</feature>
<feature type="chain" id="PRO_0000400024" description="Protein disulfide-isomerase 5-1">
    <location>
        <begin position="26"/>
        <end position="146"/>
    </location>
</feature>
<feature type="domain" description="Thioredoxin" evidence="3">
    <location>
        <begin position="26"/>
        <end position="133"/>
    </location>
</feature>
<feature type="active site" description="Nucleophile" evidence="1">
    <location>
        <position position="55"/>
    </location>
</feature>
<feature type="active site" description="Nucleophile" evidence="1">
    <location>
        <position position="58"/>
    </location>
</feature>
<feature type="site" description="Lowers pKa of C-terminal Cys of active site" evidence="1">
    <location>
        <position position="119"/>
    </location>
</feature>
<feature type="disulfide bond" description="Redox-active" evidence="3">
    <location>
        <begin position="55"/>
        <end position="58"/>
    </location>
</feature>
<sequence>MTLGARLVAPMIILLLFIPIELVKAEVITLTPETFSDKIKEKDTAWFVKFCVPWCKHCKKLGNLWEDLGKAMEGDDEIEVGEVDCGTSRAVCTKVEIHSYPTFMLFYNGEEVSKYKGKRDVESLKAFVVEETEKAAEKAQLEDKEL</sequence>
<dbReference type="EMBL" id="U63815">
    <property type="protein sequence ID" value="AAB07885.1"/>
    <property type="status" value="ALT_SEQ"/>
    <property type="molecule type" value="Genomic_DNA"/>
</dbReference>
<dbReference type="EMBL" id="AC026875">
    <property type="protein sequence ID" value="AAF79823.1"/>
    <property type="status" value="ALT_FRAME"/>
    <property type="molecule type" value="Genomic_DNA"/>
</dbReference>
<dbReference type="EMBL" id="CP002684">
    <property type="protein sequence ID" value="AEE28218.1"/>
    <property type="molecule type" value="Genomic_DNA"/>
</dbReference>
<dbReference type="EMBL" id="CP002684">
    <property type="protein sequence ID" value="AEE28219.1"/>
    <property type="molecule type" value="Genomic_DNA"/>
</dbReference>
<dbReference type="EMBL" id="CP002684">
    <property type="protein sequence ID" value="AEE28220.1"/>
    <property type="molecule type" value="Genomic_DNA"/>
</dbReference>
<dbReference type="EMBL" id="CP002684">
    <property type="protein sequence ID" value="ANM58216.1"/>
    <property type="molecule type" value="Genomic_DNA"/>
</dbReference>
<dbReference type="EMBL" id="BT004994">
    <property type="protein sequence ID" value="AAO50527.1"/>
    <property type="molecule type" value="mRNA"/>
</dbReference>
<dbReference type="EMBL" id="AK117714">
    <property type="protein sequence ID" value="BAC42365.1"/>
    <property type="molecule type" value="mRNA"/>
</dbReference>
<dbReference type="RefSeq" id="NP_001318951.1">
    <property type="nucleotide sequence ID" value="NM_001331745.1"/>
</dbReference>
<dbReference type="RefSeq" id="NP_172274.1">
    <property type="nucleotide sequence ID" value="NM_100670.2"/>
</dbReference>
<dbReference type="RefSeq" id="NP_973787.1">
    <property type="nucleotide sequence ID" value="NM_202058.2"/>
</dbReference>
<dbReference type="RefSeq" id="NP_973788.1">
    <property type="nucleotide sequence ID" value="NM_202059.3"/>
</dbReference>
<dbReference type="SMR" id="Q8GYD1"/>
<dbReference type="BioGRID" id="22552">
    <property type="interactions" value="1"/>
</dbReference>
<dbReference type="FunCoup" id="Q8GYD1">
    <property type="interactions" value="1066"/>
</dbReference>
<dbReference type="IntAct" id="Q8GYD1">
    <property type="interactions" value="1"/>
</dbReference>
<dbReference type="STRING" id="3702.Q8GYD1"/>
<dbReference type="SwissPalm" id="Q8GYD1"/>
<dbReference type="PaxDb" id="3702-AT1G07960.2"/>
<dbReference type="ProteomicsDB" id="236667"/>
<dbReference type="DNASU" id="837311"/>
<dbReference type="EnsemblPlants" id="AT1G07960.1">
    <property type="protein sequence ID" value="AT1G07960.1"/>
    <property type="gene ID" value="AT1G07960"/>
</dbReference>
<dbReference type="EnsemblPlants" id="AT1G07960.2">
    <property type="protein sequence ID" value="AT1G07960.2"/>
    <property type="gene ID" value="AT1G07960"/>
</dbReference>
<dbReference type="EnsemblPlants" id="AT1G07960.3">
    <property type="protein sequence ID" value="AT1G07960.3"/>
    <property type="gene ID" value="AT1G07960"/>
</dbReference>
<dbReference type="EnsemblPlants" id="AT1G07960.4">
    <property type="protein sequence ID" value="AT1G07960.4"/>
    <property type="gene ID" value="AT1G07960"/>
</dbReference>
<dbReference type="GeneID" id="837311"/>
<dbReference type="Gramene" id="AT1G07960.1">
    <property type="protein sequence ID" value="AT1G07960.1"/>
    <property type="gene ID" value="AT1G07960"/>
</dbReference>
<dbReference type="Gramene" id="AT1G07960.2">
    <property type="protein sequence ID" value="AT1G07960.2"/>
    <property type="gene ID" value="AT1G07960"/>
</dbReference>
<dbReference type="Gramene" id="AT1G07960.3">
    <property type="protein sequence ID" value="AT1G07960.3"/>
    <property type="gene ID" value="AT1G07960"/>
</dbReference>
<dbReference type="Gramene" id="AT1G07960.4">
    <property type="protein sequence ID" value="AT1G07960.4"/>
    <property type="gene ID" value="AT1G07960"/>
</dbReference>
<dbReference type="KEGG" id="ath:AT1G07960"/>
<dbReference type="Araport" id="AT1G07960"/>
<dbReference type="TAIR" id="AT1G07960">
    <property type="gene designation" value="PDIL5-1"/>
</dbReference>
<dbReference type="eggNOG" id="KOG0191">
    <property type="taxonomic scope" value="Eukaryota"/>
</dbReference>
<dbReference type="HOGENOM" id="CLU_090389_4_2_1"/>
<dbReference type="InParanoid" id="Q8GYD1"/>
<dbReference type="OMA" id="WCRHSRN"/>
<dbReference type="OrthoDB" id="72053at2759"/>
<dbReference type="PhylomeDB" id="Q8GYD1"/>
<dbReference type="PRO" id="PR:Q8GYD1"/>
<dbReference type="Proteomes" id="UP000006548">
    <property type="component" value="Chromosome 1"/>
</dbReference>
<dbReference type="ExpressionAtlas" id="Q8GYD1">
    <property type="expression patterns" value="baseline and differential"/>
</dbReference>
<dbReference type="GO" id="GO:0005737">
    <property type="term" value="C:cytoplasm"/>
    <property type="evidence" value="ECO:0007669"/>
    <property type="project" value="UniProtKB-ARBA"/>
</dbReference>
<dbReference type="GO" id="GO:0012505">
    <property type="term" value="C:endomembrane system"/>
    <property type="evidence" value="ECO:0007669"/>
    <property type="project" value="UniProtKB-ARBA"/>
</dbReference>
<dbReference type="GO" id="GO:0043231">
    <property type="term" value="C:intracellular membrane-bounded organelle"/>
    <property type="evidence" value="ECO:0007669"/>
    <property type="project" value="UniProtKB-ARBA"/>
</dbReference>
<dbReference type="Gene3D" id="3.40.30.10">
    <property type="entry name" value="Glutaredoxin"/>
    <property type="match status" value="1"/>
</dbReference>
<dbReference type="InterPro" id="IPR051063">
    <property type="entry name" value="PDI"/>
</dbReference>
<dbReference type="InterPro" id="IPR036249">
    <property type="entry name" value="Thioredoxin-like_sf"/>
</dbReference>
<dbReference type="InterPro" id="IPR013766">
    <property type="entry name" value="Thioredoxin_domain"/>
</dbReference>
<dbReference type="PANTHER" id="PTHR45672">
    <property type="entry name" value="PROTEIN DISULFIDE-ISOMERASE C17H9.14C-RELATED"/>
    <property type="match status" value="1"/>
</dbReference>
<dbReference type="PANTHER" id="PTHR45672:SF3">
    <property type="entry name" value="THIOREDOXIN DOMAIN-CONTAINING PROTEIN 5"/>
    <property type="match status" value="1"/>
</dbReference>
<dbReference type="Pfam" id="PF00085">
    <property type="entry name" value="Thioredoxin"/>
    <property type="match status" value="1"/>
</dbReference>
<dbReference type="SUPFAM" id="SSF52833">
    <property type="entry name" value="Thioredoxin-like"/>
    <property type="match status" value="1"/>
</dbReference>
<dbReference type="PROSITE" id="PS51352">
    <property type="entry name" value="THIOREDOXIN_2"/>
    <property type="match status" value="1"/>
</dbReference>
<evidence type="ECO:0000250" key="1"/>
<evidence type="ECO:0000255" key="2"/>
<evidence type="ECO:0000255" key="3">
    <source>
        <dbReference type="PROSITE-ProRule" id="PRU00691"/>
    </source>
</evidence>
<evidence type="ECO:0000305" key="4"/>
<gene>
    <name type="primary">PDIL5-1</name>
    <name type="synonym">PDIL6-1</name>
    <name type="ordered locus">At1g07960</name>
    <name type="ORF">T6D22.5</name>
</gene>
<comment type="function">
    <text evidence="1">Acts as a protein-folding catalyst that interacts with nascent polypeptides to catalyze the formation, isomerization, and reduction or oxidation of disulfide bonds.</text>
</comment>
<comment type="similarity">
    <text evidence="4">Belongs to the protein disulfide isomerase family.</text>
</comment>
<comment type="sequence caution" evidence="4">
    <conflict type="frameshift">
        <sequence resource="EMBL-CDS" id="AAB07885"/>
    </conflict>
</comment>
<comment type="sequence caution" evidence="4">
    <conflict type="erroneous gene model prediction">
        <sequence resource="EMBL-CDS" id="AAF79823"/>
    </conflict>
</comment>
<proteinExistence type="evidence at transcript level"/>
<keyword id="KW-1015">Disulfide bond</keyword>
<keyword id="KW-0676">Redox-active center</keyword>
<keyword id="KW-1185">Reference proteome</keyword>
<keyword id="KW-0732">Signal</keyword>
<accession>Q8GYD1</accession>
<accession>Q96313</accession>
<accession>Q9LN11</accession>
<reference key="1">
    <citation type="journal article" date="1989" name="Mol. Gen. Genet.">
        <title>The gene family encoding the Arabidopsis thaliana translation elongation factor EF-1 alpha: molecular cloning, characterization and expression.</title>
        <authorList>
            <person name="Axelos M."/>
            <person name="Bardet C."/>
            <person name="Liboz T."/>
            <person name="Le van Thai A."/>
            <person name="Curie C."/>
            <person name="Lescure B."/>
        </authorList>
    </citation>
    <scope>NUCLEOTIDE SEQUENCE [GENOMIC DNA]</scope>
    <source>
        <strain>cv. Columbia</strain>
    </source>
</reference>
<reference key="2">
    <citation type="journal article" date="2000" name="Nature">
        <title>Sequence and analysis of chromosome 1 of the plant Arabidopsis thaliana.</title>
        <authorList>
            <person name="Theologis A."/>
            <person name="Ecker J.R."/>
            <person name="Palm C.J."/>
            <person name="Federspiel N.A."/>
            <person name="Kaul S."/>
            <person name="White O."/>
            <person name="Alonso J."/>
            <person name="Altafi H."/>
            <person name="Araujo R."/>
            <person name="Bowman C.L."/>
            <person name="Brooks S.Y."/>
            <person name="Buehler E."/>
            <person name="Chan A."/>
            <person name="Chao Q."/>
            <person name="Chen H."/>
            <person name="Cheuk R.F."/>
            <person name="Chin C.W."/>
            <person name="Chung M.K."/>
            <person name="Conn L."/>
            <person name="Conway A.B."/>
            <person name="Conway A.R."/>
            <person name="Creasy T.H."/>
            <person name="Dewar K."/>
            <person name="Dunn P."/>
            <person name="Etgu P."/>
            <person name="Feldblyum T.V."/>
            <person name="Feng J.-D."/>
            <person name="Fong B."/>
            <person name="Fujii C.Y."/>
            <person name="Gill J.E."/>
            <person name="Goldsmith A.D."/>
            <person name="Haas B."/>
            <person name="Hansen N.F."/>
            <person name="Hughes B."/>
            <person name="Huizar L."/>
            <person name="Hunter J.L."/>
            <person name="Jenkins J."/>
            <person name="Johnson-Hopson C."/>
            <person name="Khan S."/>
            <person name="Khaykin E."/>
            <person name="Kim C.J."/>
            <person name="Koo H.L."/>
            <person name="Kremenetskaia I."/>
            <person name="Kurtz D.B."/>
            <person name="Kwan A."/>
            <person name="Lam B."/>
            <person name="Langin-Hooper S."/>
            <person name="Lee A."/>
            <person name="Lee J.M."/>
            <person name="Lenz C.A."/>
            <person name="Li J.H."/>
            <person name="Li Y.-P."/>
            <person name="Lin X."/>
            <person name="Liu S.X."/>
            <person name="Liu Z.A."/>
            <person name="Luros J.S."/>
            <person name="Maiti R."/>
            <person name="Marziali A."/>
            <person name="Militscher J."/>
            <person name="Miranda M."/>
            <person name="Nguyen M."/>
            <person name="Nierman W.C."/>
            <person name="Osborne B.I."/>
            <person name="Pai G."/>
            <person name="Peterson J."/>
            <person name="Pham P.K."/>
            <person name="Rizzo M."/>
            <person name="Rooney T."/>
            <person name="Rowley D."/>
            <person name="Sakano H."/>
            <person name="Salzberg S.L."/>
            <person name="Schwartz J.R."/>
            <person name="Shinn P."/>
            <person name="Southwick A.M."/>
            <person name="Sun H."/>
            <person name="Tallon L.J."/>
            <person name="Tambunga G."/>
            <person name="Toriumi M.J."/>
            <person name="Town C.D."/>
            <person name="Utterback T."/>
            <person name="Van Aken S."/>
            <person name="Vaysberg M."/>
            <person name="Vysotskaia V.S."/>
            <person name="Walker M."/>
            <person name="Wu D."/>
            <person name="Yu G."/>
            <person name="Fraser C.M."/>
            <person name="Venter J.C."/>
            <person name="Davis R.W."/>
        </authorList>
    </citation>
    <scope>NUCLEOTIDE SEQUENCE [LARGE SCALE GENOMIC DNA]</scope>
    <source>
        <strain>cv. Columbia</strain>
    </source>
</reference>
<reference key="3">
    <citation type="journal article" date="2017" name="Plant J.">
        <title>Araport11: a complete reannotation of the Arabidopsis thaliana reference genome.</title>
        <authorList>
            <person name="Cheng C.Y."/>
            <person name="Krishnakumar V."/>
            <person name="Chan A.P."/>
            <person name="Thibaud-Nissen F."/>
            <person name="Schobel S."/>
            <person name="Town C.D."/>
        </authorList>
    </citation>
    <scope>GENOME REANNOTATION</scope>
    <source>
        <strain>cv. Columbia</strain>
    </source>
</reference>
<reference key="4">
    <citation type="journal article" date="2003" name="Science">
        <title>Empirical analysis of transcriptional activity in the Arabidopsis genome.</title>
        <authorList>
            <person name="Yamada K."/>
            <person name="Lim J."/>
            <person name="Dale J.M."/>
            <person name="Chen H."/>
            <person name="Shinn P."/>
            <person name="Palm C.J."/>
            <person name="Southwick A.M."/>
            <person name="Wu H.C."/>
            <person name="Kim C.J."/>
            <person name="Nguyen M."/>
            <person name="Pham P.K."/>
            <person name="Cheuk R.F."/>
            <person name="Karlin-Newmann G."/>
            <person name="Liu S.X."/>
            <person name="Lam B."/>
            <person name="Sakano H."/>
            <person name="Wu T."/>
            <person name="Yu G."/>
            <person name="Miranda M."/>
            <person name="Quach H.L."/>
            <person name="Tripp M."/>
            <person name="Chang C.H."/>
            <person name="Lee J.M."/>
            <person name="Toriumi M.J."/>
            <person name="Chan M.M."/>
            <person name="Tang C.C."/>
            <person name="Onodera C.S."/>
            <person name="Deng J.M."/>
            <person name="Akiyama K."/>
            <person name="Ansari Y."/>
            <person name="Arakawa T."/>
            <person name="Banh J."/>
            <person name="Banno F."/>
            <person name="Bowser L."/>
            <person name="Brooks S.Y."/>
            <person name="Carninci P."/>
            <person name="Chao Q."/>
            <person name="Choy N."/>
            <person name="Enju A."/>
            <person name="Goldsmith A.D."/>
            <person name="Gurjal M."/>
            <person name="Hansen N.F."/>
            <person name="Hayashizaki Y."/>
            <person name="Johnson-Hopson C."/>
            <person name="Hsuan V.W."/>
            <person name="Iida K."/>
            <person name="Karnes M."/>
            <person name="Khan S."/>
            <person name="Koesema E."/>
            <person name="Ishida J."/>
            <person name="Jiang P.X."/>
            <person name="Jones T."/>
            <person name="Kawai J."/>
            <person name="Kamiya A."/>
            <person name="Meyers C."/>
            <person name="Nakajima M."/>
            <person name="Narusaka M."/>
            <person name="Seki M."/>
            <person name="Sakurai T."/>
            <person name="Satou M."/>
            <person name="Tamse R."/>
            <person name="Vaysberg M."/>
            <person name="Wallender E.K."/>
            <person name="Wong C."/>
            <person name="Yamamura Y."/>
            <person name="Yuan S."/>
            <person name="Shinozaki K."/>
            <person name="Davis R.W."/>
            <person name="Theologis A."/>
            <person name="Ecker J.R."/>
        </authorList>
    </citation>
    <scope>NUCLEOTIDE SEQUENCE [LARGE SCALE MRNA]</scope>
    <source>
        <strain>cv. Columbia</strain>
    </source>
</reference>
<reference key="5">
    <citation type="journal article" date="2005" name="Plant Physiol.">
        <title>Phylogenetic analyses identify 10 classes of the protein disulfide isomerase family in plants, including single-domain protein disulfide isomerase-related proteins.</title>
        <authorList>
            <person name="Houston N.L."/>
            <person name="Fan C."/>
            <person name="Xiang J.Q."/>
            <person name="Schulze J.M."/>
            <person name="Jung R."/>
            <person name="Boston R.S."/>
        </authorList>
    </citation>
    <scope>GENE FAMILY</scope>
    <scope>NOMENCLATURE</scope>
</reference>
<reference key="6">
    <citation type="journal article" date="2010" name="BMC Plant Biol.">
        <title>The protein disulfide isomerase gene family in bread wheat (T. aestivum L.).</title>
        <authorList>
            <person name="d'Aloisio E."/>
            <person name="Paolacci A.R."/>
            <person name="Dhanapal A.P."/>
            <person name="Tanzarella O.A."/>
            <person name="Porceddu E."/>
            <person name="Ciaffi M."/>
        </authorList>
    </citation>
    <scope>GENE FAMILY</scope>
    <scope>NOMENCLATURE</scope>
</reference>
<protein>
    <recommendedName>
        <fullName>Protein disulfide-isomerase 5-1</fullName>
        <shortName>AtPDIL5-1</shortName>
    </recommendedName>
    <alternativeName>
        <fullName>Protein disulfide-isomerase 6-1</fullName>
        <shortName>AtPDIL6-1</shortName>
    </alternativeName>
</protein>
<name>PDI51_ARATH</name>